<feature type="transit peptide" description="Mitochondrion" evidence="2">
    <location>
        <begin position="1"/>
        <end position="35"/>
    </location>
</feature>
<feature type="chain" id="PRO_0000122913" description="DNA repair protein recA homolog 3, mitochondrial">
    <location>
        <begin position="36"/>
        <end position="430"/>
    </location>
</feature>
<feature type="region of interest" description="Disordered" evidence="3">
    <location>
        <begin position="385"/>
        <end position="415"/>
    </location>
</feature>
<feature type="binding site" evidence="2">
    <location>
        <begin position="119"/>
        <end position="126"/>
    </location>
    <ligand>
        <name>ATP</name>
        <dbReference type="ChEBI" id="CHEBI:30616"/>
    </ligand>
</feature>
<keyword id="KW-0067">ATP-binding</keyword>
<keyword id="KW-0227">DNA damage</keyword>
<keyword id="KW-0233">DNA recombination</keyword>
<keyword id="KW-0238">DNA-binding</keyword>
<keyword id="KW-0496">Mitochondrion</keyword>
<keyword id="KW-0547">Nucleotide-binding</keyword>
<keyword id="KW-1185">Reference proteome</keyword>
<keyword id="KW-0809">Transit peptide</keyword>
<dbReference type="EMBL" id="AC005917">
    <property type="protein sequence ID" value="AAD10148.1"/>
    <property type="status" value="ALT_SEQ"/>
    <property type="molecule type" value="Genomic_DNA"/>
</dbReference>
<dbReference type="EMBL" id="CP002685">
    <property type="protein sequence ID" value="AEC06888.1"/>
    <property type="molecule type" value="Genomic_DNA"/>
</dbReference>
<dbReference type="EMBL" id="BT029745">
    <property type="protein sequence ID" value="ABM06015.1"/>
    <property type="molecule type" value="mRNA"/>
</dbReference>
<dbReference type="PIR" id="D84577">
    <property type="entry name" value="D84577"/>
</dbReference>
<dbReference type="SMR" id="Q9ZUP2"/>
<dbReference type="BioGRID" id="1823">
    <property type="interactions" value="1"/>
</dbReference>
<dbReference type="FunCoup" id="Q9ZUP2">
    <property type="interactions" value="309"/>
</dbReference>
<dbReference type="STRING" id="3702.Q9ZUP2"/>
<dbReference type="iPTMnet" id="Q9ZUP2"/>
<dbReference type="PaxDb" id="3702-AT2G19490.1"/>
<dbReference type="ProteomicsDB" id="225929"/>
<dbReference type="EnsemblPlants" id="AT2G19490.1">
    <property type="protein sequence ID" value="AT2G19490.1"/>
    <property type="gene ID" value="AT2G19490"/>
</dbReference>
<dbReference type="GeneID" id="816468"/>
<dbReference type="Gramene" id="AT2G19490.1">
    <property type="protein sequence ID" value="AT2G19490.1"/>
    <property type="gene ID" value="AT2G19490"/>
</dbReference>
<dbReference type="KEGG" id="ath:AT2G19490"/>
<dbReference type="Araport" id="AT2G19490"/>
<dbReference type="TAIR" id="AT2G19490">
    <property type="gene designation" value="RECA2"/>
</dbReference>
<dbReference type="eggNOG" id="KOG1433">
    <property type="taxonomic scope" value="Eukaryota"/>
</dbReference>
<dbReference type="HOGENOM" id="CLU_040469_0_2_1"/>
<dbReference type="InParanoid" id="Q9ZUP2"/>
<dbReference type="OMA" id="DSKMGLH"/>
<dbReference type="OrthoDB" id="5957327at2759"/>
<dbReference type="PhylomeDB" id="Q9ZUP2"/>
<dbReference type="CD-CODE" id="4299E36E">
    <property type="entry name" value="Nucleolus"/>
</dbReference>
<dbReference type="PRO" id="PR:Q9ZUP2"/>
<dbReference type="Proteomes" id="UP000006548">
    <property type="component" value="Chromosome 2"/>
</dbReference>
<dbReference type="ExpressionAtlas" id="Q9ZUP2">
    <property type="expression patterns" value="baseline and differential"/>
</dbReference>
<dbReference type="GO" id="GO:0005739">
    <property type="term" value="C:mitochondrion"/>
    <property type="evidence" value="ECO:0007669"/>
    <property type="project" value="UniProtKB-SubCell"/>
</dbReference>
<dbReference type="GO" id="GO:0005524">
    <property type="term" value="F:ATP binding"/>
    <property type="evidence" value="ECO:0007669"/>
    <property type="project" value="UniProtKB-KW"/>
</dbReference>
<dbReference type="GO" id="GO:0016887">
    <property type="term" value="F:ATP hydrolysis activity"/>
    <property type="evidence" value="ECO:0007669"/>
    <property type="project" value="InterPro"/>
</dbReference>
<dbReference type="GO" id="GO:0140664">
    <property type="term" value="F:ATP-dependent DNA damage sensor activity"/>
    <property type="evidence" value="ECO:0007669"/>
    <property type="project" value="InterPro"/>
</dbReference>
<dbReference type="GO" id="GO:0003697">
    <property type="term" value="F:single-stranded DNA binding"/>
    <property type="evidence" value="ECO:0007669"/>
    <property type="project" value="InterPro"/>
</dbReference>
<dbReference type="GO" id="GO:0006310">
    <property type="term" value="P:DNA recombination"/>
    <property type="evidence" value="ECO:0007669"/>
    <property type="project" value="UniProtKB-KW"/>
</dbReference>
<dbReference type="GO" id="GO:0006281">
    <property type="term" value="P:DNA repair"/>
    <property type="evidence" value="ECO:0007669"/>
    <property type="project" value="InterPro"/>
</dbReference>
<dbReference type="CDD" id="cd00983">
    <property type="entry name" value="RecA"/>
    <property type="match status" value="1"/>
</dbReference>
<dbReference type="FunFam" id="3.40.50.300:FF:000087">
    <property type="entry name" value="Recombinase RecA"/>
    <property type="match status" value="1"/>
</dbReference>
<dbReference type="Gene3D" id="3.40.50.300">
    <property type="entry name" value="P-loop containing nucleotide triphosphate hydrolases"/>
    <property type="match status" value="1"/>
</dbReference>
<dbReference type="HAMAP" id="MF_00268">
    <property type="entry name" value="RecA"/>
    <property type="match status" value="1"/>
</dbReference>
<dbReference type="InterPro" id="IPR003593">
    <property type="entry name" value="AAA+_ATPase"/>
</dbReference>
<dbReference type="InterPro" id="IPR013765">
    <property type="entry name" value="DNA_recomb/repair_RecA"/>
</dbReference>
<dbReference type="InterPro" id="IPR020584">
    <property type="entry name" value="DNA_recomb/repair_RecA_CS"/>
</dbReference>
<dbReference type="InterPro" id="IPR027417">
    <property type="entry name" value="P-loop_NTPase"/>
</dbReference>
<dbReference type="InterPro" id="IPR049261">
    <property type="entry name" value="RecA-like_C"/>
</dbReference>
<dbReference type="InterPro" id="IPR049428">
    <property type="entry name" value="RecA-like_N"/>
</dbReference>
<dbReference type="InterPro" id="IPR020588">
    <property type="entry name" value="RecA_ATP-bd"/>
</dbReference>
<dbReference type="InterPro" id="IPR023400">
    <property type="entry name" value="RecA_C_sf"/>
</dbReference>
<dbReference type="InterPro" id="IPR020587">
    <property type="entry name" value="RecA_monomer-monomer_interface"/>
</dbReference>
<dbReference type="NCBIfam" id="TIGR02012">
    <property type="entry name" value="tigrfam_recA"/>
    <property type="match status" value="1"/>
</dbReference>
<dbReference type="PANTHER" id="PTHR45900:SF6">
    <property type="entry name" value="DNA REPAIR PROTEIN RECA HOMOLOG 3, MITOCHONDRIAL-RELATED"/>
    <property type="match status" value="1"/>
</dbReference>
<dbReference type="PANTHER" id="PTHR45900">
    <property type="entry name" value="RECA"/>
    <property type="match status" value="1"/>
</dbReference>
<dbReference type="Pfam" id="PF00154">
    <property type="entry name" value="RecA"/>
    <property type="match status" value="1"/>
</dbReference>
<dbReference type="Pfam" id="PF21096">
    <property type="entry name" value="RecA_C"/>
    <property type="match status" value="1"/>
</dbReference>
<dbReference type="PRINTS" id="PR00142">
    <property type="entry name" value="RECA"/>
</dbReference>
<dbReference type="SMART" id="SM00382">
    <property type="entry name" value="AAA"/>
    <property type="match status" value="1"/>
</dbReference>
<dbReference type="SUPFAM" id="SSF52540">
    <property type="entry name" value="P-loop containing nucleoside triphosphate hydrolases"/>
    <property type="match status" value="1"/>
</dbReference>
<dbReference type="SUPFAM" id="SSF54752">
    <property type="entry name" value="RecA protein, C-terminal domain"/>
    <property type="match status" value="1"/>
</dbReference>
<dbReference type="PROSITE" id="PS00321">
    <property type="entry name" value="RECA_1"/>
    <property type="match status" value="1"/>
</dbReference>
<dbReference type="PROSITE" id="PS50162">
    <property type="entry name" value="RECA_2"/>
    <property type="match status" value="1"/>
</dbReference>
<dbReference type="PROSITE" id="PS50163">
    <property type="entry name" value="RECA_3"/>
    <property type="match status" value="1"/>
</dbReference>
<name>RECA3_ARATH</name>
<proteinExistence type="evidence at transcript level"/>
<comment type="function">
    <text evidence="1">Involved in recombination ability and DNA strand transfer activity.</text>
</comment>
<comment type="subcellular location">
    <subcellularLocation>
        <location evidence="4">Mitochondrion</location>
    </subcellularLocation>
</comment>
<comment type="similarity">
    <text evidence="4">Belongs to the RecA family.</text>
</comment>
<comment type="sequence caution" evidence="4">
    <conflict type="erroneous gene model prediction">
        <sequence resource="EMBL-CDS" id="AAD10148"/>
    </conflict>
</comment>
<gene>
    <name type="ordered locus">At2g19490</name>
    <name type="ORF">F3P11.9</name>
</gene>
<reference key="1">
    <citation type="journal article" date="1999" name="Nature">
        <title>Sequence and analysis of chromosome 2 of the plant Arabidopsis thaliana.</title>
        <authorList>
            <person name="Lin X."/>
            <person name="Kaul S."/>
            <person name="Rounsley S.D."/>
            <person name="Shea T.P."/>
            <person name="Benito M.-I."/>
            <person name="Town C.D."/>
            <person name="Fujii C.Y."/>
            <person name="Mason T.M."/>
            <person name="Bowman C.L."/>
            <person name="Barnstead M.E."/>
            <person name="Feldblyum T.V."/>
            <person name="Buell C.R."/>
            <person name="Ketchum K.A."/>
            <person name="Lee J.J."/>
            <person name="Ronning C.M."/>
            <person name="Koo H.L."/>
            <person name="Moffat K.S."/>
            <person name="Cronin L.A."/>
            <person name="Shen M."/>
            <person name="Pai G."/>
            <person name="Van Aken S."/>
            <person name="Umayam L."/>
            <person name="Tallon L.J."/>
            <person name="Gill J.E."/>
            <person name="Adams M.D."/>
            <person name="Carrera A.J."/>
            <person name="Creasy T.H."/>
            <person name="Goodman H.M."/>
            <person name="Somerville C.R."/>
            <person name="Copenhaver G.P."/>
            <person name="Preuss D."/>
            <person name="Nierman W.C."/>
            <person name="White O."/>
            <person name="Eisen J.A."/>
            <person name="Salzberg S.L."/>
            <person name="Fraser C.M."/>
            <person name="Venter J.C."/>
        </authorList>
    </citation>
    <scope>NUCLEOTIDE SEQUENCE [LARGE SCALE GENOMIC DNA]</scope>
    <source>
        <strain>cv. Columbia</strain>
    </source>
</reference>
<reference key="2">
    <citation type="journal article" date="2017" name="Plant J.">
        <title>Araport11: a complete reannotation of the Arabidopsis thaliana reference genome.</title>
        <authorList>
            <person name="Cheng C.Y."/>
            <person name="Krishnakumar V."/>
            <person name="Chan A.P."/>
            <person name="Thibaud-Nissen F."/>
            <person name="Schobel S."/>
            <person name="Town C.D."/>
        </authorList>
    </citation>
    <scope>GENOME REANNOTATION</scope>
    <source>
        <strain>cv. Columbia</strain>
    </source>
</reference>
<reference key="3">
    <citation type="submission" date="2006-12" db="EMBL/GenBank/DDBJ databases">
        <title>Arabidopsis ORF clones.</title>
        <authorList>
            <person name="Bautista V.R."/>
            <person name="Kim C.J."/>
            <person name="Chen H."/>
            <person name="Wu S.Y."/>
            <person name="De Los Reyes C."/>
            <person name="Ecker J.R."/>
        </authorList>
    </citation>
    <scope>NUCLEOTIDE SEQUENCE [LARGE SCALE MRNA]</scope>
    <source>
        <strain>cv. Columbia</strain>
    </source>
</reference>
<protein>
    <recommendedName>
        <fullName>DNA repair protein recA homolog 3, mitochondrial</fullName>
    </recommendedName>
    <alternativeName>
        <fullName>Recombinase A homolog 3</fullName>
    </alternativeName>
</protein>
<sequence length="430" mass="46160">MARILRNVYSLRSSLFSSELLRRSVVGTSFQLRGFAAKAKKKSKSDGNGSSEEGMSKKEIALQQALDQITSSFGKGSIMYLGRAVSPRNVPVFSTGSFALDVALGVGGLPKGRVVEIYGPEASGKTTLALHVIAEAQKQGGTCVFVDAEHALDSSLAKAIGVNTENLLLSQPDCGEQALSLVDTLIRSGSVDVIVVDSVAALVPKGELEGEMGDAHMAMQARLMSQALRKLSHSLSLSQTLLIFINQVRSKLSTFGGFGGPTEVTCGGNALKFYASMRLNIKRIGLIKKGEETTGSQVSVKIVKNKLAPPFRTAQFELEFGKGICKITEIIDLSIKHKFIAKNGTFYNLNGKNYHGKEALKRFLKQNESDQEELMKKLQDKLIADEAADKETESESEEEDSLRVVVSPDNTDDESPALVVGAAAVVVEAA</sequence>
<accession>Q9ZUP2</accession>
<accession>A1L4V8</accession>
<evidence type="ECO:0000250" key="1"/>
<evidence type="ECO:0000255" key="2"/>
<evidence type="ECO:0000256" key="3">
    <source>
        <dbReference type="SAM" id="MobiDB-lite"/>
    </source>
</evidence>
<evidence type="ECO:0000305" key="4"/>
<organism>
    <name type="scientific">Arabidopsis thaliana</name>
    <name type="common">Mouse-ear cress</name>
    <dbReference type="NCBI Taxonomy" id="3702"/>
    <lineage>
        <taxon>Eukaryota</taxon>
        <taxon>Viridiplantae</taxon>
        <taxon>Streptophyta</taxon>
        <taxon>Embryophyta</taxon>
        <taxon>Tracheophyta</taxon>
        <taxon>Spermatophyta</taxon>
        <taxon>Magnoliopsida</taxon>
        <taxon>eudicotyledons</taxon>
        <taxon>Gunneridae</taxon>
        <taxon>Pentapetalae</taxon>
        <taxon>rosids</taxon>
        <taxon>malvids</taxon>
        <taxon>Brassicales</taxon>
        <taxon>Brassicaceae</taxon>
        <taxon>Camelineae</taxon>
        <taxon>Arabidopsis</taxon>
    </lineage>
</organism>